<keyword id="KW-0119">Carbohydrate metabolism</keyword>
<keyword id="KW-0320">Glycogen biosynthesis</keyword>
<keyword id="KW-0321">Glycogen metabolism</keyword>
<keyword id="KW-0328">Glycosyltransferase</keyword>
<keyword id="KW-0808">Transferase</keyword>
<accession>Q5N4W5</accession>
<organism>
    <name type="scientific">Synechococcus sp. (strain ATCC 27144 / PCC 6301 / SAUG 1402/1)</name>
    <name type="common">Anacystis nidulans</name>
    <dbReference type="NCBI Taxonomy" id="269084"/>
    <lineage>
        <taxon>Bacteria</taxon>
        <taxon>Bacillati</taxon>
        <taxon>Cyanobacteriota</taxon>
        <taxon>Cyanophyceae</taxon>
        <taxon>Synechococcales</taxon>
        <taxon>Synechococcaceae</taxon>
        <taxon>Synechococcus</taxon>
    </lineage>
</organism>
<name>GLGB_SYNP6</name>
<dbReference type="EC" id="2.4.1.18" evidence="1"/>
<dbReference type="EMBL" id="AP008231">
    <property type="protein sequence ID" value="BAD78654.1"/>
    <property type="molecule type" value="Genomic_DNA"/>
</dbReference>
<dbReference type="RefSeq" id="WP_011242776.1">
    <property type="nucleotide sequence ID" value="NZ_CP085785.1"/>
</dbReference>
<dbReference type="SMR" id="Q5N4W5"/>
<dbReference type="CAZy" id="CBM48">
    <property type="family name" value="Carbohydrate-Binding Module Family 48"/>
</dbReference>
<dbReference type="CAZy" id="GH13">
    <property type="family name" value="Glycoside Hydrolase Family 13"/>
</dbReference>
<dbReference type="GeneID" id="72429938"/>
<dbReference type="KEGG" id="syc:syc0464_c"/>
<dbReference type="eggNOG" id="COG0296">
    <property type="taxonomic scope" value="Bacteria"/>
</dbReference>
<dbReference type="UniPathway" id="UPA00164"/>
<dbReference type="Proteomes" id="UP000001175">
    <property type="component" value="Chromosome"/>
</dbReference>
<dbReference type="GO" id="GO:0005829">
    <property type="term" value="C:cytosol"/>
    <property type="evidence" value="ECO:0007669"/>
    <property type="project" value="TreeGrafter"/>
</dbReference>
<dbReference type="GO" id="GO:0003844">
    <property type="term" value="F:1,4-alpha-glucan branching enzyme activity"/>
    <property type="evidence" value="ECO:0007669"/>
    <property type="project" value="UniProtKB-UniRule"/>
</dbReference>
<dbReference type="GO" id="GO:0043169">
    <property type="term" value="F:cation binding"/>
    <property type="evidence" value="ECO:0007669"/>
    <property type="project" value="InterPro"/>
</dbReference>
<dbReference type="GO" id="GO:0004553">
    <property type="term" value="F:hydrolase activity, hydrolyzing O-glycosyl compounds"/>
    <property type="evidence" value="ECO:0007669"/>
    <property type="project" value="InterPro"/>
</dbReference>
<dbReference type="GO" id="GO:0005978">
    <property type="term" value="P:glycogen biosynthetic process"/>
    <property type="evidence" value="ECO:0007669"/>
    <property type="project" value="UniProtKB-UniRule"/>
</dbReference>
<dbReference type="CDD" id="cd11322">
    <property type="entry name" value="AmyAc_Glg_BE"/>
    <property type="match status" value="1"/>
</dbReference>
<dbReference type="CDD" id="cd02855">
    <property type="entry name" value="E_set_GBE_prok_N"/>
    <property type="match status" value="1"/>
</dbReference>
<dbReference type="FunFam" id="2.60.40.10:FF:000169">
    <property type="entry name" value="1,4-alpha-glucan branching enzyme GlgB"/>
    <property type="match status" value="1"/>
</dbReference>
<dbReference type="FunFam" id="2.60.40.1180:FF:000002">
    <property type="entry name" value="1,4-alpha-glucan branching enzyme GlgB"/>
    <property type="match status" value="1"/>
</dbReference>
<dbReference type="FunFam" id="3.20.20.80:FF:000003">
    <property type="entry name" value="1,4-alpha-glucan branching enzyme GlgB"/>
    <property type="match status" value="1"/>
</dbReference>
<dbReference type="Gene3D" id="3.20.20.80">
    <property type="entry name" value="Glycosidases"/>
    <property type="match status" value="1"/>
</dbReference>
<dbReference type="Gene3D" id="2.60.40.1180">
    <property type="entry name" value="Golgi alpha-mannosidase II"/>
    <property type="match status" value="1"/>
</dbReference>
<dbReference type="Gene3D" id="2.60.40.10">
    <property type="entry name" value="Immunoglobulins"/>
    <property type="match status" value="2"/>
</dbReference>
<dbReference type="HAMAP" id="MF_00685">
    <property type="entry name" value="GlgB"/>
    <property type="match status" value="1"/>
</dbReference>
<dbReference type="InterPro" id="IPR006048">
    <property type="entry name" value="A-amylase/branching_C"/>
</dbReference>
<dbReference type="InterPro" id="IPR037439">
    <property type="entry name" value="Branching_enzy"/>
</dbReference>
<dbReference type="InterPro" id="IPR006407">
    <property type="entry name" value="GlgB"/>
</dbReference>
<dbReference type="InterPro" id="IPR054169">
    <property type="entry name" value="GlgB_N"/>
</dbReference>
<dbReference type="InterPro" id="IPR044143">
    <property type="entry name" value="GlgB_N_E_set_prok"/>
</dbReference>
<dbReference type="InterPro" id="IPR006047">
    <property type="entry name" value="Glyco_hydro_13_cat_dom"/>
</dbReference>
<dbReference type="InterPro" id="IPR004193">
    <property type="entry name" value="Glyco_hydro_13_N"/>
</dbReference>
<dbReference type="InterPro" id="IPR013780">
    <property type="entry name" value="Glyco_hydro_b"/>
</dbReference>
<dbReference type="InterPro" id="IPR017853">
    <property type="entry name" value="Glycoside_hydrolase_SF"/>
</dbReference>
<dbReference type="InterPro" id="IPR013783">
    <property type="entry name" value="Ig-like_fold"/>
</dbReference>
<dbReference type="InterPro" id="IPR014756">
    <property type="entry name" value="Ig_E-set"/>
</dbReference>
<dbReference type="NCBIfam" id="TIGR01515">
    <property type="entry name" value="branching_enzym"/>
    <property type="match status" value="1"/>
</dbReference>
<dbReference type="NCBIfam" id="NF003811">
    <property type="entry name" value="PRK05402.1"/>
    <property type="match status" value="1"/>
</dbReference>
<dbReference type="NCBIfam" id="NF008967">
    <property type="entry name" value="PRK12313.1"/>
    <property type="match status" value="1"/>
</dbReference>
<dbReference type="PANTHER" id="PTHR43651">
    <property type="entry name" value="1,4-ALPHA-GLUCAN-BRANCHING ENZYME"/>
    <property type="match status" value="1"/>
</dbReference>
<dbReference type="PANTHER" id="PTHR43651:SF3">
    <property type="entry name" value="1,4-ALPHA-GLUCAN-BRANCHING ENZYME"/>
    <property type="match status" value="1"/>
</dbReference>
<dbReference type="Pfam" id="PF00128">
    <property type="entry name" value="Alpha-amylase"/>
    <property type="match status" value="2"/>
</dbReference>
<dbReference type="Pfam" id="PF02806">
    <property type="entry name" value="Alpha-amylase_C"/>
    <property type="match status" value="1"/>
</dbReference>
<dbReference type="Pfam" id="PF02922">
    <property type="entry name" value="CBM_48"/>
    <property type="match status" value="1"/>
</dbReference>
<dbReference type="Pfam" id="PF22019">
    <property type="entry name" value="GlgB_N"/>
    <property type="match status" value="1"/>
</dbReference>
<dbReference type="PIRSF" id="PIRSF000463">
    <property type="entry name" value="GlgB"/>
    <property type="match status" value="1"/>
</dbReference>
<dbReference type="SMART" id="SM00642">
    <property type="entry name" value="Aamy"/>
    <property type="match status" value="1"/>
</dbReference>
<dbReference type="SUPFAM" id="SSF51445">
    <property type="entry name" value="(Trans)glycosidases"/>
    <property type="match status" value="1"/>
</dbReference>
<dbReference type="SUPFAM" id="SSF81296">
    <property type="entry name" value="E set domains"/>
    <property type="match status" value="2"/>
</dbReference>
<dbReference type="SUPFAM" id="SSF51011">
    <property type="entry name" value="Glycosyl hydrolase domain"/>
    <property type="match status" value="1"/>
</dbReference>
<comment type="function">
    <text evidence="1">Catalyzes the formation of the alpha-1,6-glucosidic linkages in glycogen by scission of a 1,4-alpha-linked oligosaccharide from growing alpha-1,4-glucan chains and the subsequent attachment of the oligosaccharide to the alpha-1,6 position.</text>
</comment>
<comment type="catalytic activity">
    <reaction evidence="1">
        <text>Transfers a segment of a (1-&gt;4)-alpha-D-glucan chain to a primary hydroxy group in a similar glucan chain.</text>
        <dbReference type="EC" id="2.4.1.18"/>
    </reaction>
</comment>
<comment type="pathway">
    <text evidence="1">Glycan biosynthesis; glycogen biosynthesis.</text>
</comment>
<comment type="subunit">
    <text evidence="1">Monomer.</text>
</comment>
<comment type="similarity">
    <text evidence="1">Belongs to the glycosyl hydrolase 13 family. GlgB subfamily.</text>
</comment>
<feature type="chain" id="PRO_0000188755" description="1,4-alpha-glucan branching enzyme GlgB">
    <location>
        <begin position="1"/>
        <end position="774"/>
    </location>
</feature>
<feature type="active site" description="Nucleophile" evidence="1">
    <location>
        <position position="440"/>
    </location>
</feature>
<feature type="active site" description="Proton donor" evidence="1">
    <location>
        <position position="493"/>
    </location>
</feature>
<proteinExistence type="inferred from homology"/>
<reference key="1">
    <citation type="journal article" date="2007" name="Photosyn. Res.">
        <title>Complete nucleotide sequence of the freshwater unicellular cyanobacterium Synechococcus elongatus PCC 6301 chromosome: gene content and organization.</title>
        <authorList>
            <person name="Sugita C."/>
            <person name="Ogata K."/>
            <person name="Shikata M."/>
            <person name="Jikuya H."/>
            <person name="Takano J."/>
            <person name="Furumichi M."/>
            <person name="Kanehisa M."/>
            <person name="Omata T."/>
            <person name="Sugiura M."/>
            <person name="Sugita M."/>
        </authorList>
    </citation>
    <scope>NUCLEOTIDE SEQUENCE [LARGE SCALE GENOMIC DNA]</scope>
    <source>
        <strain>ATCC 27144 / PCC 6301 / SAUG 1402/1</strain>
    </source>
</reference>
<evidence type="ECO:0000255" key="1">
    <source>
        <dbReference type="HAMAP-Rule" id="MF_00685"/>
    </source>
</evidence>
<gene>
    <name evidence="1" type="primary">glgB</name>
    <name type="ordered locus">syc0464_c</name>
</gene>
<protein>
    <recommendedName>
        <fullName evidence="1">1,4-alpha-glucan branching enzyme GlgB</fullName>
        <ecNumber evidence="1">2.4.1.18</ecNumber>
    </recommendedName>
    <alternativeName>
        <fullName evidence="1">1,4-alpha-D-glucan:1,4-alpha-D-glucan 6-glucosyl-transferase</fullName>
    </alternativeName>
    <alternativeName>
        <fullName evidence="1">Alpha-(1-&gt;4)-glucan branching enzyme</fullName>
    </alternativeName>
    <alternativeName>
        <fullName evidence="1">Glycogen branching enzyme</fullName>
        <shortName evidence="1">BE</shortName>
    </alternativeName>
</protein>
<sequence length="774" mass="89195">MTGTTPLPSSSLSVEQVNRIASNQEQNPFDILGPHPYEHEGQAGWVIRAYLPEAQEAAVICPALRREFAMHPVHHPHFFETWVPEETLEIYQLRITEGERERIIYDPYAFRSPLLTDYDIHLFAEGNHHRIYEKLGAHPCELENVAGVNFAVWAPSARNVSILGDFNSWDGRKHQMARRSNGIWELFIPELTVGAAYKYEIKNYDGHIYEKSDPYGFQQEVRPKTASIVADLDRYTWGDADWLERRRHQEPLRQPISVYEVHLGSWMHASSDAIATDAQGKPLPPVPVADLKPGARFLTYRELADRLIPYVLDLGYSHIELLPIAEHPFDGSWGYQVTGYYAATSRYGSPEDFMYFVDRCHQNGIGVILDWVPGHFPKDGHGLAFFDGTHLYEHADSRQGEHREWGTLVFNYGRHEVRNFLAANALFWFDKYHIDGIRVDAVASMLYLDYNRKEGEWIPNEYGGRENIEAADFLRQVNHLIFSYFPGALSIAEESTSWPMVSWPTYVGGLGFNLKWNMGWMHDMLDYFSMDPWFRQFHQNNVTFSIWYAFSENFMLALSHDEVVHGKSNLIGKMPGDEWQKFANLRCLLGYMFTHPGKKTLFMGMEFGQWAEWNVWGDLEWHLLQYEPHQGLKQFVKDLNHLYRNAPALYSEDCNQAGFEWIDCSDNRHSIVSFIRRAHESDRFLVVVCNFTPQPHAHYRIGVPVAGFYREIFNSDARSYGGSNMGNLGGKWTDEWSCHNRPYSLDLCLPPLTTLVLELASGPESLSEAANSPL</sequence>